<keyword id="KW-0903">Direct protein sequencing</keyword>
<keyword id="KW-1015">Disulfide bond</keyword>
<keyword id="KW-0873">Pyrrolidone carboxylic acid</keyword>
<keyword id="KW-0964">Secreted</keyword>
<keyword id="KW-0732">Signal</keyword>
<sequence>LKFVVLICLVIMASTSAQQCGDETCGAGTCCAVFSQNHCRRLSQMYDLCSDHSDASPSGNYLFFCPCEPGLHCDRNTWTCTEGSSRSE</sequence>
<accession>Q5D228</accession>
<proteinExistence type="evidence at protein level"/>
<evidence type="ECO:0000269" key="1">
    <source>
    </source>
</evidence>
<evidence type="ECO:0000303" key="2">
    <source>
    </source>
</evidence>
<evidence type="ECO:0000305" key="3"/>
<evidence type="ECO:0000305" key="4">
    <source>
    </source>
</evidence>
<organism>
    <name type="scientific">Illawarra wisharti</name>
    <name type="common">Illawarra funnel-web spider</name>
    <dbReference type="NCBI Taxonomy" id="278061"/>
    <lineage>
        <taxon>Eukaryota</taxon>
        <taxon>Metazoa</taxon>
        <taxon>Ecdysozoa</taxon>
        <taxon>Arthropoda</taxon>
        <taxon>Chelicerata</taxon>
        <taxon>Arachnida</taxon>
        <taxon>Araneae</taxon>
        <taxon>Mygalomorphae</taxon>
        <taxon>Hexathelidae</taxon>
        <taxon>Hadronyche</taxon>
    </lineage>
</organism>
<reference key="1">
    <citation type="journal article" date="2005" name="Peptides">
        <title>Discovery of an MIT-like atracotoxin family: spider venom peptides that share sequence homology but not pharmacological properties with AVIT family proteins.</title>
        <authorList>
            <person name="Wen S."/>
            <person name="Wilson D.T."/>
            <person name="Kuruppu S."/>
            <person name="Korsinczky M.L."/>
            <person name="Hedrick J."/>
            <person name="Pang L."/>
            <person name="Szeto T."/>
            <person name="Hodgson W.C."/>
            <person name="Alewood P.F."/>
            <person name="Nicholson G.M."/>
        </authorList>
    </citation>
    <scope>NUCLEOTIDE SEQUENCE [MRNA]</scope>
    <scope>PROTEIN SEQUENCE OF 42-49</scope>
    <scope>PYROGLUTAMATE FORMATION AT GLN-18</scope>
    <scope>SUBCELLULAR LOCATION</scope>
    <source>
        <tissue>Venom</tissue>
        <tissue>Venom gland</tissue>
    </source>
</reference>
<protein>
    <recommendedName>
        <fullName>U1-hexatoxin-Iw1c</fullName>
        <shortName>U1-HXTX-Iw1c</shortName>
    </recommendedName>
    <alternativeName>
        <fullName evidence="2">Atracotoxin-Hs20f7406</fullName>
        <shortName evidence="2">AcTx-Hs20f7406</shortName>
    </alternativeName>
</protein>
<dbReference type="EMBL" id="AY914168">
    <property type="protein sequence ID" value="AAX11348.1"/>
    <property type="molecule type" value="mRNA"/>
</dbReference>
<dbReference type="SMR" id="Q5D228"/>
<dbReference type="ArachnoServer" id="AS000564">
    <property type="toxin name" value="U1-hexatoxin-Iw1c"/>
</dbReference>
<dbReference type="GO" id="GO:0005576">
    <property type="term" value="C:extracellular region"/>
    <property type="evidence" value="ECO:0007669"/>
    <property type="project" value="UniProtKB-SubCell"/>
</dbReference>
<dbReference type="Gene3D" id="2.10.80.10">
    <property type="entry name" value="Lipase, subunit A"/>
    <property type="match status" value="1"/>
</dbReference>
<dbReference type="InterPro" id="IPR020202">
    <property type="entry name" value="Atracotoxin"/>
</dbReference>
<dbReference type="Pfam" id="PF17556">
    <property type="entry name" value="MIT_LIKE_ACTX"/>
    <property type="match status" value="1"/>
</dbReference>
<feature type="signal peptide">
    <location>
        <begin position="1" status="less than"/>
        <end position="17"/>
    </location>
</feature>
<feature type="chain" id="PRO_0000265762" description="U1-hexatoxin-Iw1c">
    <location>
        <begin position="18"/>
        <end position="85"/>
    </location>
</feature>
<feature type="propeptide" id="PRO_0000265763">
    <location>
        <begin position="86"/>
        <end position="88"/>
    </location>
</feature>
<feature type="modified residue" description="Pyrrolidone carboxylic acid" evidence="1">
    <location>
        <position position="18"/>
    </location>
</feature>
<feature type="disulfide bond" evidence="4">
    <location>
        <begin position="20"/>
        <end position="31"/>
    </location>
</feature>
<feature type="disulfide bond" evidence="4">
    <location>
        <begin position="25"/>
        <end position="39"/>
    </location>
</feature>
<feature type="disulfide bond" evidence="4">
    <location>
        <begin position="30"/>
        <end position="65"/>
    </location>
</feature>
<feature type="disulfide bond" evidence="4">
    <location>
        <begin position="49"/>
        <end position="73"/>
    </location>
</feature>
<feature type="disulfide bond" evidence="4">
    <location>
        <begin position="67"/>
        <end position="80"/>
    </location>
</feature>
<feature type="non-terminal residue">
    <location>
        <position position="1"/>
    </location>
</feature>
<name>T7406_ILLWI</name>
<comment type="subcellular location">
    <subcellularLocation>
        <location evidence="1">Secreted</location>
    </subcellularLocation>
</comment>
<comment type="tissue specificity">
    <text evidence="4">Expressed by the venom gland.</text>
</comment>
<comment type="similarity">
    <text evidence="3">Belongs to the MIT-like AcTx family.</text>
</comment>